<gene>
    <name type="primary">LFNG</name>
</gene>
<proteinExistence type="evidence at transcript level"/>
<protein>
    <recommendedName>
        <fullName evidence="6">Beta-1,3-N-acetylglucosaminyltransferase lunatic fringe</fullName>
        <ecNumber evidence="2">2.4.1.222</ecNumber>
    </recommendedName>
    <alternativeName>
        <fullName>O-fucosylpeptide 3-beta-N-acetylglucosaminyltransferase</fullName>
    </alternativeName>
</protein>
<feature type="chain" id="PRO_0000250424" description="Beta-1,3-N-acetylglucosaminyltransferase lunatic fringe">
    <location>
        <begin position="1"/>
        <end position="380"/>
    </location>
</feature>
<feature type="topological domain" description="Cytoplasmic" evidence="4">
    <location>
        <begin position="1"/>
        <end position="8"/>
    </location>
</feature>
<feature type="transmembrane region" description="Helical; Signal-anchor for type II membrane protein" evidence="4">
    <location>
        <begin position="9"/>
        <end position="29"/>
    </location>
</feature>
<feature type="topological domain" description="Lumenal" evidence="4">
    <location>
        <begin position="30"/>
        <end position="380"/>
    </location>
</feature>
<feature type="region of interest" description="Disordered" evidence="5">
    <location>
        <begin position="85"/>
        <end position="110"/>
    </location>
</feature>
<feature type="compositionally biased region" description="Pro residues" evidence="5">
    <location>
        <begin position="90"/>
        <end position="107"/>
    </location>
</feature>
<feature type="active site" evidence="1">
    <location>
        <position position="291"/>
    </location>
</feature>
<feature type="binding site" evidence="1">
    <location>
        <position position="130"/>
    </location>
    <ligand>
        <name>substrate</name>
    </ligand>
</feature>
<feature type="binding site" evidence="1">
    <location>
        <position position="202"/>
    </location>
    <ligand>
        <name>substrate</name>
    </ligand>
</feature>
<feature type="binding site" evidence="1">
    <location>
        <position position="203"/>
    </location>
    <ligand>
        <name>Mn(2+)</name>
        <dbReference type="ChEBI" id="CHEBI:29035"/>
    </ligand>
</feature>
<feature type="binding site" evidence="1">
    <location>
        <position position="315"/>
    </location>
    <ligand>
        <name>Mn(2+)</name>
        <dbReference type="ChEBI" id="CHEBI:29035"/>
    </ligand>
</feature>
<feature type="site" description="Cleavage; by furin-like protease" evidence="4">
    <location>
        <begin position="87"/>
        <end position="88"/>
    </location>
</feature>
<feature type="glycosylation site" description="N-linked (GlcNAc...) asparagine" evidence="4">
    <location>
        <position position="168"/>
    </location>
</feature>
<feature type="disulfide bond" evidence="1">
    <location>
        <begin position="169"/>
        <end position="180"/>
    </location>
</feature>
<feature type="disulfide bond" evidence="1">
    <location>
        <begin position="198"/>
        <end position="261"/>
    </location>
</feature>
<feature type="disulfide bond" evidence="1">
    <location>
        <begin position="365"/>
        <end position="374"/>
    </location>
</feature>
<name>LFNG_BOVIN</name>
<accession>Q2KJ92</accession>
<organism>
    <name type="scientific">Bos taurus</name>
    <name type="common">Bovine</name>
    <dbReference type="NCBI Taxonomy" id="9913"/>
    <lineage>
        <taxon>Eukaryota</taxon>
        <taxon>Metazoa</taxon>
        <taxon>Chordata</taxon>
        <taxon>Craniata</taxon>
        <taxon>Vertebrata</taxon>
        <taxon>Euteleostomi</taxon>
        <taxon>Mammalia</taxon>
        <taxon>Eutheria</taxon>
        <taxon>Laurasiatheria</taxon>
        <taxon>Artiodactyla</taxon>
        <taxon>Ruminantia</taxon>
        <taxon>Pecora</taxon>
        <taxon>Bovidae</taxon>
        <taxon>Bovinae</taxon>
        <taxon>Bos</taxon>
    </lineage>
</organism>
<reference key="1">
    <citation type="submission" date="2005-09" db="EMBL/GenBank/DDBJ databases">
        <authorList>
            <consortium name="NIH - Mammalian Gene Collection (MGC) project"/>
        </authorList>
    </citation>
    <scope>NUCLEOTIDE SEQUENCE [LARGE SCALE MRNA]</scope>
    <source>
        <strain>Hereford</strain>
        <tissue>Thymus</tissue>
    </source>
</reference>
<comment type="function">
    <text evidence="2 3">Glycosyltransferase that initiates the elongation of O-linked fucose residues attached to EGF-like repeats in the extracellular domain of Notch molecules. Modulates NOTCH1 activity by modifying O-fucose residues at specific EGF-like domains resulting in inhibition of NOTCH1 activation by JAG1 and enhancement of NOTCH1 activation by DLL1 via an increase in its binding to DLL1. Decreases the binding of JAG1 to NOTCH2 but not that of DLL1. Essential mediator of somite segmentation and patterning.</text>
</comment>
<comment type="catalytic activity">
    <reaction evidence="2">
        <text>3-O-(alpha-L-fucosyl)-L-threonyl-[EGF-like domain protein] + UDP-N-acetyl-alpha-D-glucosamine = 3-O-(N-acetyl-beta-D-glucosaminyl-(1-&gt;3)-alpha-L-fucosyl)-L-threonyl-[EGF-like domain protein] + UDP + H(+)</text>
        <dbReference type="Rhea" id="RHEA:70531"/>
        <dbReference type="Rhea" id="RHEA-COMP:17922"/>
        <dbReference type="Rhea" id="RHEA-COMP:17923"/>
        <dbReference type="ChEBI" id="CHEBI:15378"/>
        <dbReference type="ChEBI" id="CHEBI:57705"/>
        <dbReference type="ChEBI" id="CHEBI:58223"/>
        <dbReference type="ChEBI" id="CHEBI:189631"/>
        <dbReference type="ChEBI" id="CHEBI:189634"/>
        <dbReference type="EC" id="2.4.1.222"/>
    </reaction>
</comment>
<comment type="catalytic activity">
    <reaction evidence="2">
        <text>3-O-(alpha-L-fucosyl)-L-seryl-[EGF-like domain protein] + UDP-N-acetyl-alpha-D-glucosamine = 3-O-(N-acetyl-beta-D-glucosaminyl-(1-&gt;3)-alpha-L-fucosyl)-L-seryl-[EGF-like domain protein] + UDP + H(+)</text>
        <dbReference type="Rhea" id="RHEA:70511"/>
        <dbReference type="Rhea" id="RHEA-COMP:17919"/>
        <dbReference type="Rhea" id="RHEA-COMP:17920"/>
        <dbReference type="ChEBI" id="CHEBI:15378"/>
        <dbReference type="ChEBI" id="CHEBI:57705"/>
        <dbReference type="ChEBI" id="CHEBI:58223"/>
        <dbReference type="ChEBI" id="CHEBI:189632"/>
        <dbReference type="ChEBI" id="CHEBI:189633"/>
        <dbReference type="EC" id="2.4.1.222"/>
    </reaction>
</comment>
<comment type="cofactor">
    <cofactor evidence="2">
        <name>Mn(2+)</name>
        <dbReference type="ChEBI" id="CHEBI:29035"/>
    </cofactor>
    <cofactor evidence="2">
        <name>Co(2+)</name>
        <dbReference type="ChEBI" id="CHEBI:48828"/>
    </cofactor>
    <text evidence="2">Manganese is the most effective. Can also use cobalt with lower efficiency. Has some activity with magnesium and calcium, but not zinc.</text>
</comment>
<comment type="subcellular location">
    <subcellularLocation>
        <location evidence="2">Golgi apparatus</location>
    </subcellularLocation>
    <subcellularLocation>
        <location evidence="6">Golgi apparatus membrane</location>
        <topology evidence="6">Single-pass type II membrane protein</topology>
    </subcellularLocation>
</comment>
<comment type="PTM">
    <text evidence="6">A soluble form may be derived from the membrane form by proteolytic processing.</text>
</comment>
<comment type="similarity">
    <text evidence="6">Belongs to the glycosyltransferase 31 family.</text>
</comment>
<keyword id="KW-0217">Developmental protein</keyword>
<keyword id="KW-1015">Disulfide bond</keyword>
<keyword id="KW-0325">Glycoprotein</keyword>
<keyword id="KW-0328">Glycosyltransferase</keyword>
<keyword id="KW-0333">Golgi apparatus</keyword>
<keyword id="KW-0464">Manganese</keyword>
<keyword id="KW-0472">Membrane</keyword>
<keyword id="KW-0479">Metal-binding</keyword>
<keyword id="KW-1185">Reference proteome</keyword>
<keyword id="KW-0735">Signal-anchor</keyword>
<keyword id="KW-0808">Transferase</keyword>
<keyword id="KW-0812">Transmembrane</keyword>
<keyword id="KW-1133">Transmembrane helix</keyword>
<sequence>MLKRCGRRLLLALAGALLACLLVLTADPPPPPVPAERGRRALRSLAGPSGVATAPGLEAAAAAAPGAPVREVHSLSEYFSLLTRSRRDVGPPPGGAPRPADGPPRPLAEPLAPRDVFIAVKTTKKFHRARLDLLLETWISRHEEMTFIFTDGEDEALARRTGHVVNTNCSAAHSRQALSCKMAVEYDRFIESGRKWFCHVDDDNYVNVRALLRLLGSYPHTQDVYLGKPSLDRPIQATERVSENKVRPVHFWFATGGAGFCISRGLALKMSPWASGGHFMSTAERIRLPDDCTIGYIVEALLGVPLVRCGLFHSHLENLQQVPASELHEQVTLSYGMFENKRNSVHIKGPFSVEADPSRFRSVHCHLYPDTSWCPRSAIF</sequence>
<evidence type="ECO:0000250" key="1"/>
<evidence type="ECO:0000250" key="2">
    <source>
        <dbReference type="UniProtKB" id="O09010"/>
    </source>
</evidence>
<evidence type="ECO:0000250" key="3">
    <source>
        <dbReference type="UniProtKB" id="Q8NES3"/>
    </source>
</evidence>
<evidence type="ECO:0000255" key="4"/>
<evidence type="ECO:0000256" key="5">
    <source>
        <dbReference type="SAM" id="MobiDB-lite"/>
    </source>
</evidence>
<evidence type="ECO:0000305" key="6"/>
<dbReference type="EC" id="2.4.1.222" evidence="2"/>
<dbReference type="EMBL" id="BC105463">
    <property type="protein sequence ID" value="AAI05464.1"/>
    <property type="molecule type" value="mRNA"/>
</dbReference>
<dbReference type="RefSeq" id="NP_001039687.1">
    <property type="nucleotide sequence ID" value="NM_001046222.2"/>
</dbReference>
<dbReference type="SMR" id="Q2KJ92"/>
<dbReference type="FunCoup" id="Q2KJ92">
    <property type="interactions" value="263"/>
</dbReference>
<dbReference type="STRING" id="9913.ENSBTAP00000052963"/>
<dbReference type="CAZy" id="GT31">
    <property type="family name" value="Glycosyltransferase Family 31"/>
</dbReference>
<dbReference type="GlyCosmos" id="Q2KJ92">
    <property type="glycosylation" value="1 site, No reported glycans"/>
</dbReference>
<dbReference type="GlyGen" id="Q2KJ92">
    <property type="glycosylation" value="1 site"/>
</dbReference>
<dbReference type="PaxDb" id="9913-ENSBTAP00000052963"/>
<dbReference type="Ensembl" id="ENSBTAT00000056003.4">
    <property type="protein sequence ID" value="ENSBTAP00000052963.4"/>
    <property type="gene ID" value="ENSBTAG00000040361.4"/>
</dbReference>
<dbReference type="GeneID" id="516209"/>
<dbReference type="KEGG" id="bta:516209"/>
<dbReference type="CTD" id="3955"/>
<dbReference type="VEuPathDB" id="HostDB:ENSBTAG00000040361"/>
<dbReference type="VGNC" id="VGNC:30849">
    <property type="gene designation" value="LFNG"/>
</dbReference>
<dbReference type="eggNOG" id="ENOG502QV30">
    <property type="taxonomic scope" value="Eukaryota"/>
</dbReference>
<dbReference type="GeneTree" id="ENSGT00940000158717"/>
<dbReference type="HOGENOM" id="CLU_056611_0_1_1"/>
<dbReference type="InParanoid" id="Q2KJ92"/>
<dbReference type="OMA" id="CPHTAVF"/>
<dbReference type="OrthoDB" id="8959630at2759"/>
<dbReference type="TreeFam" id="TF324207"/>
<dbReference type="Proteomes" id="UP000009136">
    <property type="component" value="Chromosome 25"/>
</dbReference>
<dbReference type="Bgee" id="ENSBTAG00000040361">
    <property type="expression patterns" value="Expressed in neutrophil and 102 other cell types or tissues"/>
</dbReference>
<dbReference type="GO" id="GO:0000139">
    <property type="term" value="C:Golgi membrane"/>
    <property type="evidence" value="ECO:0007669"/>
    <property type="project" value="UniProtKB-SubCell"/>
</dbReference>
<dbReference type="GO" id="GO:0046872">
    <property type="term" value="F:metal ion binding"/>
    <property type="evidence" value="ECO:0007669"/>
    <property type="project" value="UniProtKB-KW"/>
</dbReference>
<dbReference type="GO" id="GO:0033829">
    <property type="term" value="F:O-fucosylpeptide 3-beta-N-acetylglucosaminyltransferase activity"/>
    <property type="evidence" value="ECO:0000250"/>
    <property type="project" value="UniProtKB"/>
</dbReference>
<dbReference type="GO" id="GO:0007386">
    <property type="term" value="P:compartment pattern specification"/>
    <property type="evidence" value="ECO:0007669"/>
    <property type="project" value="Ensembl"/>
</dbReference>
<dbReference type="GO" id="GO:0002315">
    <property type="term" value="P:marginal zone B cell differentiation"/>
    <property type="evidence" value="ECO:0000250"/>
    <property type="project" value="UniProtKB"/>
</dbReference>
<dbReference type="GO" id="GO:1902367">
    <property type="term" value="P:negative regulation of Notch signaling pathway involved in somitogenesis"/>
    <property type="evidence" value="ECO:0000250"/>
    <property type="project" value="UniProtKB"/>
</dbReference>
<dbReference type="GO" id="GO:0001541">
    <property type="term" value="P:ovarian follicle development"/>
    <property type="evidence" value="ECO:0007669"/>
    <property type="project" value="Ensembl"/>
</dbReference>
<dbReference type="GO" id="GO:0051446">
    <property type="term" value="P:positive regulation of meiotic cell cycle"/>
    <property type="evidence" value="ECO:0007669"/>
    <property type="project" value="Ensembl"/>
</dbReference>
<dbReference type="GO" id="GO:0045747">
    <property type="term" value="P:positive regulation of Notch signaling pathway"/>
    <property type="evidence" value="ECO:0007669"/>
    <property type="project" value="Ensembl"/>
</dbReference>
<dbReference type="GO" id="GO:0008593">
    <property type="term" value="P:regulation of Notch signaling pathway"/>
    <property type="evidence" value="ECO:0000250"/>
    <property type="project" value="UniProtKB"/>
</dbReference>
<dbReference type="GO" id="GO:0014807">
    <property type="term" value="P:regulation of somitogenesis"/>
    <property type="evidence" value="ECO:0007669"/>
    <property type="project" value="Ensembl"/>
</dbReference>
<dbReference type="GO" id="GO:0001756">
    <property type="term" value="P:somitogenesis"/>
    <property type="evidence" value="ECO:0000250"/>
    <property type="project" value="UniProtKB"/>
</dbReference>
<dbReference type="GO" id="GO:0030217">
    <property type="term" value="P:T cell differentiation"/>
    <property type="evidence" value="ECO:0000250"/>
    <property type="project" value="UniProtKB"/>
</dbReference>
<dbReference type="FunFam" id="3.90.550.50:FF:000003">
    <property type="entry name" value="Beta-1,3-N-acetylglucosaminyltransferase"/>
    <property type="match status" value="1"/>
</dbReference>
<dbReference type="Gene3D" id="3.90.550.50">
    <property type="match status" value="1"/>
</dbReference>
<dbReference type="InterPro" id="IPR017374">
    <property type="entry name" value="Fringe"/>
</dbReference>
<dbReference type="InterPro" id="IPR003378">
    <property type="entry name" value="Fringe-like_glycosylTrfase"/>
</dbReference>
<dbReference type="PANTHER" id="PTHR10811">
    <property type="entry name" value="FRINGE-RELATED"/>
    <property type="match status" value="1"/>
</dbReference>
<dbReference type="Pfam" id="PF02434">
    <property type="entry name" value="Fringe"/>
    <property type="match status" value="1"/>
</dbReference>
<dbReference type="PIRSF" id="PIRSF038073">
    <property type="entry name" value="B-acetylgalactosaminyltfrase"/>
    <property type="match status" value="1"/>
</dbReference>